<reference key="1">
    <citation type="journal article" date="2011" name="Stand. Genomic Sci.">
        <title>Complete genome sequence of the halophilic and highly halotolerant Chromohalobacter salexigens type strain (1H11(T)).</title>
        <authorList>
            <person name="Copeland A."/>
            <person name="O'Connor K."/>
            <person name="Lucas S."/>
            <person name="Lapidus A."/>
            <person name="Berry K.W."/>
            <person name="Detter J.C."/>
            <person name="Del Rio T.G."/>
            <person name="Hammon N."/>
            <person name="Dalin E."/>
            <person name="Tice H."/>
            <person name="Pitluck S."/>
            <person name="Bruce D."/>
            <person name="Goodwin L."/>
            <person name="Han C."/>
            <person name="Tapia R."/>
            <person name="Saunders E."/>
            <person name="Schmutz J."/>
            <person name="Brettin T."/>
            <person name="Larimer F."/>
            <person name="Land M."/>
            <person name="Hauser L."/>
            <person name="Vargas C."/>
            <person name="Nieto J.J."/>
            <person name="Kyrpides N.C."/>
            <person name="Ivanova N."/>
            <person name="Goker M."/>
            <person name="Klenk H.P."/>
            <person name="Csonka L.N."/>
            <person name="Woyke T."/>
        </authorList>
    </citation>
    <scope>NUCLEOTIDE SEQUENCE [LARGE SCALE GENOMIC DNA]</scope>
    <source>
        <strain>ATCC BAA-138 / DSM 3043 / CIP 106854 / NCIMB 13768 / 1H11</strain>
    </source>
</reference>
<gene>
    <name evidence="1" type="primary">rplL</name>
    <name type="ordered locus">Csal_0413</name>
</gene>
<keyword id="KW-1185">Reference proteome</keyword>
<keyword id="KW-0687">Ribonucleoprotein</keyword>
<keyword id="KW-0689">Ribosomal protein</keyword>
<organism>
    <name type="scientific">Chromohalobacter salexigens (strain ATCC BAA-138 / DSM 3043 / CIP 106854 / NCIMB 13768 / 1H11)</name>
    <dbReference type="NCBI Taxonomy" id="290398"/>
    <lineage>
        <taxon>Bacteria</taxon>
        <taxon>Pseudomonadati</taxon>
        <taxon>Pseudomonadota</taxon>
        <taxon>Gammaproteobacteria</taxon>
        <taxon>Oceanospirillales</taxon>
        <taxon>Halomonadaceae</taxon>
        <taxon>Chromohalobacter</taxon>
    </lineage>
</organism>
<comment type="function">
    <text evidence="1">Forms part of the ribosomal stalk which helps the ribosome interact with GTP-bound translation factors. Is thus essential for accurate translation.</text>
</comment>
<comment type="subunit">
    <text evidence="1">Homodimer. Part of the ribosomal stalk of the 50S ribosomal subunit. Forms a multimeric L10(L12)X complex, where L10 forms an elongated spine to which 2 to 4 L12 dimers bind in a sequential fashion. Binds GTP-bound translation factors.</text>
</comment>
<comment type="similarity">
    <text evidence="1">Belongs to the bacterial ribosomal protein bL12 family.</text>
</comment>
<evidence type="ECO:0000255" key="1">
    <source>
        <dbReference type="HAMAP-Rule" id="MF_00368"/>
    </source>
</evidence>
<evidence type="ECO:0000256" key="2">
    <source>
        <dbReference type="SAM" id="MobiDB-lite"/>
    </source>
</evidence>
<evidence type="ECO:0000305" key="3"/>
<sequence length="124" mass="12618">MALTQEDIINAVAEMSVMEVAELISAMEEKFGVSAAAAVVAGPGAGGEGEAAEEQTEFDLVLTGAGDKKVNVIKVVREITGLGLKEAKGAVDGVPATLKEGMSKEDAEAAKTKLEEAGASVELK</sequence>
<feature type="chain" id="PRO_1000006985" description="Large ribosomal subunit protein bL12">
    <location>
        <begin position="1"/>
        <end position="124"/>
    </location>
</feature>
<feature type="region of interest" description="Disordered" evidence="2">
    <location>
        <begin position="102"/>
        <end position="124"/>
    </location>
</feature>
<feature type="compositionally biased region" description="Basic and acidic residues" evidence="2">
    <location>
        <begin position="102"/>
        <end position="116"/>
    </location>
</feature>
<protein>
    <recommendedName>
        <fullName evidence="1">Large ribosomal subunit protein bL12</fullName>
    </recommendedName>
    <alternativeName>
        <fullName evidence="3">50S ribosomal protein L7/L12</fullName>
    </alternativeName>
</protein>
<proteinExistence type="inferred from homology"/>
<accession>Q1R0I3</accession>
<dbReference type="EMBL" id="CP000285">
    <property type="protein sequence ID" value="ABE57775.1"/>
    <property type="molecule type" value="Genomic_DNA"/>
</dbReference>
<dbReference type="RefSeq" id="WP_011505721.1">
    <property type="nucleotide sequence ID" value="NC_007963.1"/>
</dbReference>
<dbReference type="SMR" id="Q1R0I3"/>
<dbReference type="STRING" id="290398.Csal_0413"/>
<dbReference type="GeneID" id="95333166"/>
<dbReference type="KEGG" id="csa:Csal_0413"/>
<dbReference type="eggNOG" id="COG0222">
    <property type="taxonomic scope" value="Bacteria"/>
</dbReference>
<dbReference type="HOGENOM" id="CLU_086499_3_0_6"/>
<dbReference type="OrthoDB" id="9811748at2"/>
<dbReference type="Proteomes" id="UP000000239">
    <property type="component" value="Chromosome"/>
</dbReference>
<dbReference type="GO" id="GO:0022625">
    <property type="term" value="C:cytosolic large ribosomal subunit"/>
    <property type="evidence" value="ECO:0007669"/>
    <property type="project" value="TreeGrafter"/>
</dbReference>
<dbReference type="GO" id="GO:0003729">
    <property type="term" value="F:mRNA binding"/>
    <property type="evidence" value="ECO:0007669"/>
    <property type="project" value="TreeGrafter"/>
</dbReference>
<dbReference type="GO" id="GO:0003735">
    <property type="term" value="F:structural constituent of ribosome"/>
    <property type="evidence" value="ECO:0007669"/>
    <property type="project" value="InterPro"/>
</dbReference>
<dbReference type="GO" id="GO:0006412">
    <property type="term" value="P:translation"/>
    <property type="evidence" value="ECO:0007669"/>
    <property type="project" value="UniProtKB-UniRule"/>
</dbReference>
<dbReference type="CDD" id="cd00387">
    <property type="entry name" value="Ribosomal_L7_L12"/>
    <property type="match status" value="1"/>
</dbReference>
<dbReference type="FunFam" id="3.30.1390.10:FF:000001">
    <property type="entry name" value="50S ribosomal protein L7/L12"/>
    <property type="match status" value="1"/>
</dbReference>
<dbReference type="Gene3D" id="3.30.1390.10">
    <property type="match status" value="1"/>
</dbReference>
<dbReference type="Gene3D" id="1.20.5.710">
    <property type="entry name" value="Single helix bin"/>
    <property type="match status" value="1"/>
</dbReference>
<dbReference type="HAMAP" id="MF_00368">
    <property type="entry name" value="Ribosomal_bL12"/>
    <property type="match status" value="1"/>
</dbReference>
<dbReference type="InterPro" id="IPR000206">
    <property type="entry name" value="Ribosomal_bL12"/>
</dbReference>
<dbReference type="InterPro" id="IPR013823">
    <property type="entry name" value="Ribosomal_bL12_C"/>
</dbReference>
<dbReference type="InterPro" id="IPR014719">
    <property type="entry name" value="Ribosomal_bL12_C/ClpS-like"/>
</dbReference>
<dbReference type="InterPro" id="IPR008932">
    <property type="entry name" value="Ribosomal_bL12_oligo"/>
</dbReference>
<dbReference type="InterPro" id="IPR036235">
    <property type="entry name" value="Ribosomal_bL12_oligo_N_sf"/>
</dbReference>
<dbReference type="NCBIfam" id="TIGR00855">
    <property type="entry name" value="L12"/>
    <property type="match status" value="1"/>
</dbReference>
<dbReference type="PANTHER" id="PTHR45987">
    <property type="entry name" value="39S RIBOSOMAL PROTEIN L12"/>
    <property type="match status" value="1"/>
</dbReference>
<dbReference type="PANTHER" id="PTHR45987:SF4">
    <property type="entry name" value="LARGE RIBOSOMAL SUBUNIT PROTEIN BL12M"/>
    <property type="match status" value="1"/>
</dbReference>
<dbReference type="Pfam" id="PF00542">
    <property type="entry name" value="Ribosomal_L12"/>
    <property type="match status" value="1"/>
</dbReference>
<dbReference type="Pfam" id="PF16320">
    <property type="entry name" value="Ribosomal_L12_N"/>
    <property type="match status" value="1"/>
</dbReference>
<dbReference type="SUPFAM" id="SSF54736">
    <property type="entry name" value="ClpS-like"/>
    <property type="match status" value="1"/>
</dbReference>
<dbReference type="SUPFAM" id="SSF48300">
    <property type="entry name" value="Ribosomal protein L7/12, oligomerisation (N-terminal) domain"/>
    <property type="match status" value="1"/>
</dbReference>
<name>RL7_CHRSD</name>